<proteinExistence type="inferred from homology"/>
<gene>
    <name evidence="1" type="primary">sepF</name>
    <name type="ordered locus">spyM18_1535</name>
</gene>
<reference key="1">
    <citation type="journal article" date="2002" name="Proc. Natl. Acad. Sci. U.S.A.">
        <title>Genome sequence and comparative microarray analysis of serotype M18 group A Streptococcus strains associated with acute rheumatic fever outbreaks.</title>
        <authorList>
            <person name="Smoot J.C."/>
            <person name="Barbian K.D."/>
            <person name="Van Gompel J.J."/>
            <person name="Smoot L.M."/>
            <person name="Chaussee M.S."/>
            <person name="Sylva G.L."/>
            <person name="Sturdevant D.E."/>
            <person name="Ricklefs S.M."/>
            <person name="Porcella S.F."/>
            <person name="Parkins L.D."/>
            <person name="Beres S.B."/>
            <person name="Campbell D.S."/>
            <person name="Smith T.M."/>
            <person name="Zhang Q."/>
            <person name="Kapur V."/>
            <person name="Daly J.A."/>
            <person name="Veasy L.G."/>
            <person name="Musser J.M."/>
        </authorList>
    </citation>
    <scope>NUCLEOTIDE SEQUENCE [LARGE SCALE GENOMIC DNA]</scope>
    <source>
        <strain>MGAS8232</strain>
    </source>
</reference>
<comment type="function">
    <text evidence="1">Cell division protein that is part of the divisome complex and is recruited early to the Z-ring. Probably stimulates Z-ring formation, perhaps through the cross-linking of FtsZ protofilaments. Its function overlaps with FtsA.</text>
</comment>
<comment type="subunit">
    <text evidence="1">Homodimer. Interacts with FtsZ.</text>
</comment>
<comment type="subcellular location">
    <subcellularLocation>
        <location evidence="1">Cytoplasm</location>
    </subcellularLocation>
    <text evidence="1">Localizes to the division site, in a FtsZ-dependent manner.</text>
</comment>
<comment type="similarity">
    <text evidence="1">Belongs to the SepF family.</text>
</comment>
<evidence type="ECO:0000255" key="1">
    <source>
        <dbReference type="HAMAP-Rule" id="MF_01197"/>
    </source>
</evidence>
<evidence type="ECO:0000256" key="2">
    <source>
        <dbReference type="SAM" id="MobiDB-lite"/>
    </source>
</evidence>
<name>SEPF_STRP8</name>
<protein>
    <recommendedName>
        <fullName evidence="1">Cell division protein SepF</fullName>
    </recommendedName>
</protein>
<feature type="chain" id="PRO_0000334102" description="Cell division protein SepF">
    <location>
        <begin position="1"/>
        <end position="218"/>
    </location>
</feature>
<feature type="region of interest" description="Disordered" evidence="2">
    <location>
        <begin position="25"/>
        <end position="115"/>
    </location>
</feature>
<feature type="compositionally biased region" description="Polar residues" evidence="2">
    <location>
        <begin position="29"/>
        <end position="43"/>
    </location>
</feature>
<feature type="compositionally biased region" description="Basic and acidic residues" evidence="2">
    <location>
        <begin position="47"/>
        <end position="63"/>
    </location>
</feature>
<sequence>MAFKDTFNKMISYFDTDEVNEVEEDVAASTDNVIPRSQQSVRASSHPKQEPRNNHVQQDHQARSQEQTRSQMHPKHGTSERYYQQSQPKEGHEMVDRRKRMSTSGIANRREQYQQSTCSDQTTIALKYPRKYEDAQEIVDLLIVNECVLIDFQFMLDAQARRCLDFIDGASKVLYGSLQKVGSSMYLLAPSNVSVNIEEMTIPHTTQDIGFDFDMKRR</sequence>
<organism>
    <name type="scientific">Streptococcus pyogenes serotype M18 (strain MGAS8232)</name>
    <dbReference type="NCBI Taxonomy" id="186103"/>
    <lineage>
        <taxon>Bacteria</taxon>
        <taxon>Bacillati</taxon>
        <taxon>Bacillota</taxon>
        <taxon>Bacilli</taxon>
        <taxon>Lactobacillales</taxon>
        <taxon>Streptococcaceae</taxon>
        <taxon>Streptococcus</taxon>
    </lineage>
</organism>
<dbReference type="EMBL" id="AE009949">
    <property type="protein sequence ID" value="AAL98103.1"/>
    <property type="molecule type" value="Genomic_DNA"/>
</dbReference>
<dbReference type="RefSeq" id="WP_011018004.1">
    <property type="nucleotide sequence ID" value="NC_003485.1"/>
</dbReference>
<dbReference type="SMR" id="Q8P066"/>
<dbReference type="KEGG" id="spm:spyM18_1535"/>
<dbReference type="HOGENOM" id="CLU_078499_2_0_9"/>
<dbReference type="GO" id="GO:0005737">
    <property type="term" value="C:cytoplasm"/>
    <property type="evidence" value="ECO:0007669"/>
    <property type="project" value="UniProtKB-SubCell"/>
</dbReference>
<dbReference type="GO" id="GO:0000917">
    <property type="term" value="P:division septum assembly"/>
    <property type="evidence" value="ECO:0007669"/>
    <property type="project" value="UniProtKB-KW"/>
</dbReference>
<dbReference type="GO" id="GO:0043093">
    <property type="term" value="P:FtsZ-dependent cytokinesis"/>
    <property type="evidence" value="ECO:0007669"/>
    <property type="project" value="UniProtKB-UniRule"/>
</dbReference>
<dbReference type="Gene3D" id="3.30.110.150">
    <property type="entry name" value="SepF-like protein"/>
    <property type="match status" value="1"/>
</dbReference>
<dbReference type="HAMAP" id="MF_01197">
    <property type="entry name" value="SepF"/>
    <property type="match status" value="1"/>
</dbReference>
<dbReference type="InterPro" id="IPR023052">
    <property type="entry name" value="Cell_div_SepF"/>
</dbReference>
<dbReference type="InterPro" id="IPR007561">
    <property type="entry name" value="Cell_div_SepF/SepF-rel"/>
</dbReference>
<dbReference type="InterPro" id="IPR038594">
    <property type="entry name" value="SepF-like_sf"/>
</dbReference>
<dbReference type="PANTHER" id="PTHR35798">
    <property type="entry name" value="CELL DIVISION PROTEIN SEPF"/>
    <property type="match status" value="1"/>
</dbReference>
<dbReference type="PANTHER" id="PTHR35798:SF1">
    <property type="entry name" value="CELL DIVISION PROTEIN SEPF"/>
    <property type="match status" value="1"/>
</dbReference>
<dbReference type="Pfam" id="PF04472">
    <property type="entry name" value="SepF"/>
    <property type="match status" value="1"/>
</dbReference>
<keyword id="KW-0131">Cell cycle</keyword>
<keyword id="KW-0132">Cell division</keyword>
<keyword id="KW-0963">Cytoplasm</keyword>
<keyword id="KW-0717">Septation</keyword>
<accession>Q8P066</accession>